<dbReference type="EC" id="2.7.8.7" evidence="1"/>
<dbReference type="EMBL" id="CP000847">
    <property type="protein sequence ID" value="ABV75169.1"/>
    <property type="molecule type" value="Genomic_DNA"/>
</dbReference>
<dbReference type="RefSeq" id="WP_012149799.1">
    <property type="nucleotide sequence ID" value="NC_009881.1"/>
</dbReference>
<dbReference type="SMR" id="A8GP44"/>
<dbReference type="STRING" id="293614.A1C_04495"/>
<dbReference type="KEGG" id="rak:A1C_04495"/>
<dbReference type="eggNOG" id="COG0736">
    <property type="taxonomic scope" value="Bacteria"/>
</dbReference>
<dbReference type="HOGENOM" id="CLU_089696_3_1_5"/>
<dbReference type="Proteomes" id="UP000006830">
    <property type="component" value="Chromosome"/>
</dbReference>
<dbReference type="GO" id="GO:0005737">
    <property type="term" value="C:cytoplasm"/>
    <property type="evidence" value="ECO:0007669"/>
    <property type="project" value="UniProtKB-SubCell"/>
</dbReference>
<dbReference type="GO" id="GO:0008897">
    <property type="term" value="F:holo-[acyl-carrier-protein] synthase activity"/>
    <property type="evidence" value="ECO:0007669"/>
    <property type="project" value="UniProtKB-UniRule"/>
</dbReference>
<dbReference type="GO" id="GO:0000287">
    <property type="term" value="F:magnesium ion binding"/>
    <property type="evidence" value="ECO:0007669"/>
    <property type="project" value="UniProtKB-UniRule"/>
</dbReference>
<dbReference type="GO" id="GO:0006633">
    <property type="term" value="P:fatty acid biosynthetic process"/>
    <property type="evidence" value="ECO:0007669"/>
    <property type="project" value="UniProtKB-UniRule"/>
</dbReference>
<dbReference type="Gene3D" id="3.90.470.20">
    <property type="entry name" value="4'-phosphopantetheinyl transferase domain"/>
    <property type="match status" value="1"/>
</dbReference>
<dbReference type="HAMAP" id="MF_00101">
    <property type="entry name" value="AcpS"/>
    <property type="match status" value="1"/>
</dbReference>
<dbReference type="InterPro" id="IPR008278">
    <property type="entry name" value="4-PPantetheinyl_Trfase_dom"/>
</dbReference>
<dbReference type="InterPro" id="IPR037143">
    <property type="entry name" value="4-PPantetheinyl_Trfase_dom_sf"/>
</dbReference>
<dbReference type="InterPro" id="IPR002582">
    <property type="entry name" value="ACPS"/>
</dbReference>
<dbReference type="InterPro" id="IPR004568">
    <property type="entry name" value="Ppantetheine-prot_Trfase_dom"/>
</dbReference>
<dbReference type="NCBIfam" id="TIGR00516">
    <property type="entry name" value="acpS"/>
    <property type="match status" value="1"/>
</dbReference>
<dbReference type="NCBIfam" id="TIGR00556">
    <property type="entry name" value="pantethn_trn"/>
    <property type="match status" value="1"/>
</dbReference>
<dbReference type="Pfam" id="PF01648">
    <property type="entry name" value="ACPS"/>
    <property type="match status" value="1"/>
</dbReference>
<dbReference type="SUPFAM" id="SSF56214">
    <property type="entry name" value="4'-phosphopantetheinyl transferase"/>
    <property type="match status" value="1"/>
</dbReference>
<protein>
    <recommendedName>
        <fullName evidence="1">Holo-[acyl-carrier-protein] synthase</fullName>
        <shortName evidence="1">Holo-ACP synthase</shortName>
        <ecNumber evidence="1">2.7.8.7</ecNumber>
    </recommendedName>
    <alternativeName>
        <fullName evidence="1">4'-phosphopantetheinyl transferase AcpS</fullName>
    </alternativeName>
</protein>
<keyword id="KW-0963">Cytoplasm</keyword>
<keyword id="KW-0275">Fatty acid biosynthesis</keyword>
<keyword id="KW-0276">Fatty acid metabolism</keyword>
<keyword id="KW-0444">Lipid biosynthesis</keyword>
<keyword id="KW-0443">Lipid metabolism</keyword>
<keyword id="KW-0460">Magnesium</keyword>
<keyword id="KW-0479">Metal-binding</keyword>
<keyword id="KW-0808">Transferase</keyword>
<reference key="1">
    <citation type="submission" date="2007-09" db="EMBL/GenBank/DDBJ databases">
        <title>Complete genome sequence of Rickettsia akari.</title>
        <authorList>
            <person name="Madan A."/>
            <person name="Fahey J."/>
            <person name="Helton E."/>
            <person name="Ketteman M."/>
            <person name="Madan A."/>
            <person name="Rodrigues S."/>
            <person name="Sanchez A."/>
            <person name="Whiting M."/>
            <person name="Dasch G."/>
            <person name="Eremeeva M."/>
        </authorList>
    </citation>
    <scope>NUCLEOTIDE SEQUENCE [LARGE SCALE GENOMIC DNA]</scope>
    <source>
        <strain>Hartford</strain>
    </source>
</reference>
<organism>
    <name type="scientific">Rickettsia akari (strain Hartford)</name>
    <dbReference type="NCBI Taxonomy" id="293614"/>
    <lineage>
        <taxon>Bacteria</taxon>
        <taxon>Pseudomonadati</taxon>
        <taxon>Pseudomonadota</taxon>
        <taxon>Alphaproteobacteria</taxon>
        <taxon>Rickettsiales</taxon>
        <taxon>Rickettsiaceae</taxon>
        <taxon>Rickettsieae</taxon>
        <taxon>Rickettsia</taxon>
        <taxon>spotted fever group</taxon>
    </lineage>
</organism>
<proteinExistence type="inferred from homology"/>
<accession>A8GP44</accession>
<sequence>MLIGVGTDIVQILRIEKILHLYPELFAKRILASKELRQFALLNKTSHATFLAKRFAAKEAVSKAFGIGIGQGINFKDITILNDDLGKPIVEVSASYTKKYSSFNIHLSLSDDYPVCVAFAIVESSC</sequence>
<gene>
    <name evidence="1" type="primary">acpS</name>
    <name type="ordered locus">A1C_04495</name>
</gene>
<feature type="chain" id="PRO_1000008483" description="Holo-[acyl-carrier-protein] synthase">
    <location>
        <begin position="1"/>
        <end position="126"/>
    </location>
</feature>
<feature type="binding site" evidence="1">
    <location>
        <position position="8"/>
    </location>
    <ligand>
        <name>Mg(2+)</name>
        <dbReference type="ChEBI" id="CHEBI:18420"/>
    </ligand>
</feature>
<feature type="binding site" evidence="1">
    <location>
        <position position="59"/>
    </location>
    <ligand>
        <name>Mg(2+)</name>
        <dbReference type="ChEBI" id="CHEBI:18420"/>
    </ligand>
</feature>
<name>ACPS_RICAH</name>
<comment type="function">
    <text evidence="1">Transfers the 4'-phosphopantetheine moiety from coenzyme A to a Ser of acyl-carrier-protein.</text>
</comment>
<comment type="catalytic activity">
    <reaction evidence="1">
        <text>apo-[ACP] + CoA = holo-[ACP] + adenosine 3',5'-bisphosphate + H(+)</text>
        <dbReference type="Rhea" id="RHEA:12068"/>
        <dbReference type="Rhea" id="RHEA-COMP:9685"/>
        <dbReference type="Rhea" id="RHEA-COMP:9690"/>
        <dbReference type="ChEBI" id="CHEBI:15378"/>
        <dbReference type="ChEBI" id="CHEBI:29999"/>
        <dbReference type="ChEBI" id="CHEBI:57287"/>
        <dbReference type="ChEBI" id="CHEBI:58343"/>
        <dbReference type="ChEBI" id="CHEBI:64479"/>
        <dbReference type="EC" id="2.7.8.7"/>
    </reaction>
</comment>
<comment type="cofactor">
    <cofactor evidence="1">
        <name>Mg(2+)</name>
        <dbReference type="ChEBI" id="CHEBI:18420"/>
    </cofactor>
</comment>
<comment type="subcellular location">
    <subcellularLocation>
        <location evidence="1">Cytoplasm</location>
    </subcellularLocation>
</comment>
<comment type="similarity">
    <text evidence="1">Belongs to the P-Pant transferase superfamily. AcpS family.</text>
</comment>
<evidence type="ECO:0000255" key="1">
    <source>
        <dbReference type="HAMAP-Rule" id="MF_00101"/>
    </source>
</evidence>